<sequence length="966" mass="107179">MAAHRIRATTNNNTSLPRCKSEGTLIDLSEGVSEASLTDVKVPSPSALRLDATASFGAAREVVAIKDCCPSSFTTLKFSKGDRLYVLDSSGAEWWYAHNNTEMGYIPAAYVEPINYRDSSFSDSGMIDTVGDCNEEAAKEMDLLGEWAGVILKPTTFQNGNPFAATNSSTNPFLNGGPQSPLDQNSNEKSVDLLLFDTLAPSVPNSTSITADINGFGSGVLNMNPLSPTVGVGQTLRRDNPFFRSKRSYSLSELSILQAQSDAPQASTGFFGGLKAPAPEQFQSREDFRTAWLTHRKLARSCHDLDSLGQNPGWGQTQPVETNIVCRLDSSGGAVQLPDANISIHIPEGHVAPGDTQQISIKALLDPPLELNNDRCTTVSPVVEIKLSNMEIRTTVTLEMKVSVVVKIESRQTTEILCVRSDCKEGPYTPIPQAYIYGDMVQVCLDNLEPCMYVCVVAQSKSIAPDSTVWEHVVKKITLGVYGPKHIHPSFKTVVAMFGHDCAPKTLLVSEVGKQAQAVPPVALQLWGKHQFVLSRPQDLRVGVYSNMANYEVKASEQARVVRGFQVKLGKVSRLVYVIASRNADDVSDFTLRIQIKDDQDCILAQFCVQTPTPPPKAGPKTSVQRRFLKKKEVGKIVLSPLAITTKYPVFQDRRINNLKFGKLIKTVIRQTKNQYLLEYKKGDFVALLSEEKIRLKGQLWTKEWYIGYYQGRLGFVHAKNVLVVGKVKPIYFSGPDLTTSLFLEQILKPCKFLTYIYASVRTILMENIGNWRAFADSLGYINLPLTHFCRAELDSEPERVASVLEKLKEDCNNTESKERKSFQKELLTALLKMDCQGLVARLVMDFVLLTTAVELAGRWRELAEKLAKVSRQQMDAYEAPHRDKSGVVDSEAMWKPAYDFLVTWAAQIGDSYRDVIQELHMGLDKMKNPITKRWKHLTGTLILVNCMDALRSSAFSPAAQDDCAI</sequence>
<gene>
    <name type="primary">sh3bp4</name>
</gene>
<reference key="1">
    <citation type="submission" date="2002-06" db="EMBL/GenBank/DDBJ databases">
        <title>Seriora quinqueradiata mRNA of SH3BP4.</title>
        <authorList>
            <person name="Doi M."/>
            <person name="Abe S."/>
            <person name="Nakagawa T."/>
        </authorList>
    </citation>
    <scope>NUCLEOTIDE SEQUENCE [MRNA]</scope>
</reference>
<comment type="function">
    <text evidence="1">Possible role in regulating endocytosis of the transferrin receptor at the plasma membrane. Alternatively, may function as a negative regulator of the amino acid-induced TOR signaling by inhibiting the formation of active Rag GTPase complexes. Preferentially binds inactive Rag GTPase complexes and prevents their interaction with the mTORC1 complex inhibiting its relocalization to lysosomes and its activation. Thereby, may indirectly regulate cell growth, proliferation and autophagy (By similarity).</text>
</comment>
<comment type="subunit">
    <text evidence="1">Homodimer or homooligomer.</text>
</comment>
<comment type="subcellular location">
    <subcellularLocation>
        <location evidence="1">Membrane</location>
        <location evidence="1">Clathrin-coated pit</location>
    </subcellularLocation>
    <subcellularLocation>
        <location evidence="1">Cytoplasmic vesicle</location>
        <location evidence="1">Clathrin-coated vesicle</location>
    </subcellularLocation>
    <subcellularLocation>
        <location evidence="1">Nucleus</location>
    </subcellularLocation>
    <text evidence="1">Specifically associated with transferrin receptor-containing clathrin-coated pits and clathrin-coated vesicles. May also localize to the nucleus (By similarity).</text>
</comment>
<comment type="domain">
    <text evidence="1">The SH3 domain mediates localization to the clathrin-coated pits and vesicles.</text>
</comment>
<protein>
    <recommendedName>
        <fullName>SH3 domain-binding protein 4</fullName>
    </recommendedName>
</protein>
<organism>
    <name type="scientific">Seriola quinqueradiata</name>
    <name type="common">Five-ray yellowtail</name>
    <dbReference type="NCBI Taxonomy" id="8161"/>
    <lineage>
        <taxon>Eukaryota</taxon>
        <taxon>Metazoa</taxon>
        <taxon>Chordata</taxon>
        <taxon>Craniata</taxon>
        <taxon>Vertebrata</taxon>
        <taxon>Euteleostomi</taxon>
        <taxon>Actinopterygii</taxon>
        <taxon>Neopterygii</taxon>
        <taxon>Teleostei</taxon>
        <taxon>Neoteleostei</taxon>
        <taxon>Acanthomorphata</taxon>
        <taxon>Carangaria</taxon>
        <taxon>Carangiformes</taxon>
        <taxon>Carangidae</taxon>
        <taxon>Seriola</taxon>
    </lineage>
</organism>
<keyword id="KW-0168">Coated pit</keyword>
<keyword id="KW-0968">Cytoplasmic vesicle</keyword>
<keyword id="KW-0254">Endocytosis</keyword>
<keyword id="KW-0472">Membrane</keyword>
<keyword id="KW-0539">Nucleus</keyword>
<keyword id="KW-0677">Repeat</keyword>
<keyword id="KW-0728">SH3 domain</keyword>
<proteinExistence type="evidence at transcript level"/>
<feature type="chain" id="PRO_0000274578" description="SH3 domain-binding protein 4">
    <location>
        <begin position="1"/>
        <end position="966"/>
    </location>
</feature>
<feature type="domain" description="SH3 1" evidence="2">
    <location>
        <begin position="57"/>
        <end position="116"/>
    </location>
</feature>
<feature type="domain" description="ZU5" evidence="3">
    <location>
        <begin position="322"/>
        <end position="457"/>
    </location>
</feature>
<feature type="domain" description="SH3 2" evidence="2">
    <location>
        <begin position="657"/>
        <end position="727"/>
    </location>
</feature>
<feature type="sequence conflict" description="In Ref. 1; BAB96751." evidence="4" ref="1">
    <original>I</original>
    <variation>V</variation>
    <location>
        <position position="917"/>
    </location>
</feature>
<evidence type="ECO:0000250" key="1"/>
<evidence type="ECO:0000255" key="2">
    <source>
        <dbReference type="PROSITE-ProRule" id="PRU00192"/>
    </source>
</evidence>
<evidence type="ECO:0000255" key="3">
    <source>
        <dbReference type="PROSITE-ProRule" id="PRU00485"/>
    </source>
</evidence>
<evidence type="ECO:0000305" key="4"/>
<accession>Q8AXQ3</accession>
<accession>Q8JIP1</accession>
<accession>Q8JIQ1</accession>
<dbReference type="EMBL" id="AB074980">
    <property type="protein sequence ID" value="BAB96751.1"/>
    <property type="molecule type" value="mRNA"/>
</dbReference>
<dbReference type="EMBL" id="AB077749">
    <property type="protein sequence ID" value="BAC02945.1"/>
    <property type="molecule type" value="mRNA"/>
</dbReference>
<dbReference type="EMBL" id="AB086184">
    <property type="protein sequence ID" value="BAC41718.1"/>
    <property type="molecule type" value="mRNA"/>
</dbReference>
<dbReference type="SMR" id="Q8AXQ3"/>
<dbReference type="GO" id="GO:0005905">
    <property type="term" value="C:clathrin-coated pit"/>
    <property type="evidence" value="ECO:0007669"/>
    <property type="project" value="UniProtKB-SubCell"/>
</dbReference>
<dbReference type="GO" id="GO:0030136">
    <property type="term" value="C:clathrin-coated vesicle"/>
    <property type="evidence" value="ECO:0007669"/>
    <property type="project" value="UniProtKB-SubCell"/>
</dbReference>
<dbReference type="GO" id="GO:0005737">
    <property type="term" value="C:cytoplasm"/>
    <property type="evidence" value="ECO:0000250"/>
    <property type="project" value="UniProtKB"/>
</dbReference>
<dbReference type="GO" id="GO:0005634">
    <property type="term" value="C:nucleus"/>
    <property type="evidence" value="ECO:0007669"/>
    <property type="project" value="UniProtKB-SubCell"/>
</dbReference>
<dbReference type="GO" id="GO:0005092">
    <property type="term" value="F:GDP-dissociation inhibitor activity"/>
    <property type="evidence" value="ECO:0000250"/>
    <property type="project" value="UniProtKB"/>
</dbReference>
<dbReference type="GO" id="GO:0071230">
    <property type="term" value="P:cellular response to amino acid stimulus"/>
    <property type="evidence" value="ECO:0000250"/>
    <property type="project" value="UniProtKB"/>
</dbReference>
<dbReference type="GO" id="GO:0006897">
    <property type="term" value="P:endocytosis"/>
    <property type="evidence" value="ECO:0007669"/>
    <property type="project" value="UniProtKB-KW"/>
</dbReference>
<dbReference type="GO" id="GO:0030308">
    <property type="term" value="P:negative regulation of cell growth"/>
    <property type="evidence" value="ECO:0000250"/>
    <property type="project" value="UniProtKB"/>
</dbReference>
<dbReference type="GO" id="GO:0008285">
    <property type="term" value="P:negative regulation of cell population proliferation"/>
    <property type="evidence" value="ECO:0000250"/>
    <property type="project" value="UniProtKB"/>
</dbReference>
<dbReference type="GO" id="GO:0034260">
    <property type="term" value="P:negative regulation of GTPase activity"/>
    <property type="evidence" value="ECO:0000250"/>
    <property type="project" value="UniProtKB"/>
</dbReference>
<dbReference type="GO" id="GO:0032007">
    <property type="term" value="P:negative regulation of TOR signaling"/>
    <property type="evidence" value="ECO:0000250"/>
    <property type="project" value="UniProtKB"/>
</dbReference>
<dbReference type="GO" id="GO:0010508">
    <property type="term" value="P:positive regulation of autophagy"/>
    <property type="evidence" value="ECO:0000250"/>
    <property type="project" value="UniProtKB"/>
</dbReference>
<dbReference type="GO" id="GO:0061462">
    <property type="term" value="P:protein localization to lysosome"/>
    <property type="evidence" value="ECO:0000250"/>
    <property type="project" value="UniProtKB"/>
</dbReference>
<dbReference type="GO" id="GO:0050790">
    <property type="term" value="P:regulation of catalytic activity"/>
    <property type="evidence" value="ECO:0000250"/>
    <property type="project" value="UniProtKB"/>
</dbReference>
<dbReference type="FunFam" id="2.60.220.30:FF:000008">
    <property type="entry name" value="SH3 domain-binding protein 4"/>
    <property type="match status" value="1"/>
</dbReference>
<dbReference type="Gene3D" id="2.60.220.30">
    <property type="match status" value="1"/>
</dbReference>
<dbReference type="Gene3D" id="2.30.30.40">
    <property type="entry name" value="SH3 Domains"/>
    <property type="match status" value="1"/>
</dbReference>
<dbReference type="InterPro" id="IPR056183">
    <property type="entry name" value="DEATH_SH3BP4"/>
</dbReference>
<dbReference type="InterPro" id="IPR036028">
    <property type="entry name" value="SH3-like_dom_sf"/>
</dbReference>
<dbReference type="InterPro" id="IPR001452">
    <property type="entry name" value="SH3_domain"/>
</dbReference>
<dbReference type="InterPro" id="IPR056181">
    <property type="entry name" value="SH3BP4_C"/>
</dbReference>
<dbReference type="InterPro" id="IPR056182">
    <property type="entry name" value="UPA_SH3BP4"/>
</dbReference>
<dbReference type="InterPro" id="IPR000906">
    <property type="entry name" value="ZU5_dom"/>
</dbReference>
<dbReference type="PANTHER" id="PTHR15603:SF3">
    <property type="entry name" value="SH3 DOMAIN-BINDING PROTEIN 4"/>
    <property type="match status" value="1"/>
</dbReference>
<dbReference type="PANTHER" id="PTHR15603">
    <property type="entry name" value="SH3 DOMAIN-CONTAINING PROTEIN"/>
    <property type="match status" value="1"/>
</dbReference>
<dbReference type="Pfam" id="PF24094">
    <property type="entry name" value="DEATH_SH3BP4"/>
    <property type="match status" value="1"/>
</dbReference>
<dbReference type="Pfam" id="PF00018">
    <property type="entry name" value="SH3_1"/>
    <property type="match status" value="1"/>
</dbReference>
<dbReference type="Pfam" id="PF07653">
    <property type="entry name" value="SH3_2"/>
    <property type="match status" value="1"/>
</dbReference>
<dbReference type="Pfam" id="PF23637">
    <property type="entry name" value="SH3BP4_C"/>
    <property type="match status" value="1"/>
</dbReference>
<dbReference type="Pfam" id="PF23640">
    <property type="entry name" value="UPA_SH3BP4"/>
    <property type="match status" value="1"/>
</dbReference>
<dbReference type="Pfam" id="PF00791">
    <property type="entry name" value="ZU5"/>
    <property type="match status" value="1"/>
</dbReference>
<dbReference type="SMART" id="SM00326">
    <property type="entry name" value="SH3"/>
    <property type="match status" value="1"/>
</dbReference>
<dbReference type="SUPFAM" id="SSF50044">
    <property type="entry name" value="SH3-domain"/>
    <property type="match status" value="1"/>
</dbReference>
<dbReference type="PROSITE" id="PS50002">
    <property type="entry name" value="SH3"/>
    <property type="match status" value="2"/>
</dbReference>
<dbReference type="PROSITE" id="PS51145">
    <property type="entry name" value="ZU5"/>
    <property type="match status" value="1"/>
</dbReference>
<name>SH3B4_SERQU</name>